<proteinExistence type="evidence at protein level"/>
<protein>
    <recommendedName>
        <fullName evidence="6">Aconitate hydratase A</fullName>
        <shortName evidence="6">ACN</shortName>
        <shortName evidence="6">Aconitase</shortName>
        <ecNumber evidence="4">4.2.1.3</ecNumber>
    </recommendedName>
    <alternativeName>
        <fullName evidence="3">(2R,3S)-2-methylisocitrate dehydratase</fullName>
    </alternativeName>
    <alternativeName>
        <fullName evidence="3">(2S,3R)-3-hydroxybutane-1,2,3-tricarboxylate dehydratase</fullName>
    </alternativeName>
    <alternativeName>
        <fullName evidence="6">Iron-responsive protein-like</fullName>
        <shortName evidence="6">IRP-like</shortName>
    </alternativeName>
    <alternativeName>
        <fullName evidence="3">Probable 2-methyl-cis-aconitate hydratase</fullName>
        <ecNumber evidence="3">4.2.1.99</ecNumber>
    </alternativeName>
    <alternativeName>
        <fullName evidence="6">RNA-binding protein</fullName>
    </alternativeName>
</protein>
<keyword id="KW-0408">Iron</keyword>
<keyword id="KW-0411">Iron-sulfur</keyword>
<keyword id="KW-0456">Lyase</keyword>
<keyword id="KW-0479">Metal-binding</keyword>
<keyword id="KW-1185">Reference proteome</keyword>
<keyword id="KW-0694">RNA-binding</keyword>
<keyword id="KW-0816">Tricarboxylic acid cycle</keyword>
<dbReference type="EC" id="4.2.1.3" evidence="4"/>
<dbReference type="EC" id="4.2.1.99" evidence="3"/>
<dbReference type="EMBL" id="CP003248">
    <property type="protein sequence ID" value="AFN49388.1"/>
    <property type="molecule type" value="Genomic_DNA"/>
</dbReference>
<dbReference type="EMBL" id="AL123456">
    <property type="protein sequence ID" value="CCP44235.1"/>
    <property type="molecule type" value="Genomic_DNA"/>
</dbReference>
<dbReference type="EMBL" id="JLDD01000018">
    <property type="protein sequence ID" value="KBJ34833.1"/>
    <property type="molecule type" value="Genomic_DNA"/>
</dbReference>
<dbReference type="RefSeq" id="NP_215991.1">
    <property type="nucleotide sequence ID" value="NC_000962.3"/>
</dbReference>
<dbReference type="RefSeq" id="WP_003898889.1">
    <property type="nucleotide sequence ID" value="NZ_NVQJ01000004.1"/>
</dbReference>
<dbReference type="SMR" id="O53166"/>
<dbReference type="FunCoup" id="O53166">
    <property type="interactions" value="535"/>
</dbReference>
<dbReference type="STRING" id="83332.Rv1475c"/>
<dbReference type="MoonProt" id="O53166"/>
<dbReference type="PaxDb" id="83332-Rv1475c"/>
<dbReference type="DNASU" id="886545"/>
<dbReference type="GeneID" id="886545"/>
<dbReference type="KEGG" id="mtu:Rv1475c"/>
<dbReference type="KEGG" id="mtv:RVBD_1475c"/>
<dbReference type="PATRIC" id="fig|83332.111.peg.1642"/>
<dbReference type="TubercuList" id="Rv1475c"/>
<dbReference type="eggNOG" id="COG1048">
    <property type="taxonomic scope" value="Bacteria"/>
</dbReference>
<dbReference type="InParanoid" id="O53166"/>
<dbReference type="OrthoDB" id="9764318at2"/>
<dbReference type="PhylomeDB" id="O53166"/>
<dbReference type="BioCyc" id="MetaCyc:G185E-5659-MONOMER"/>
<dbReference type="UniPathway" id="UPA00223">
    <property type="reaction ID" value="UER00718"/>
</dbReference>
<dbReference type="UniPathway" id="UPA00946"/>
<dbReference type="Proteomes" id="UP000001584">
    <property type="component" value="Chromosome"/>
</dbReference>
<dbReference type="GO" id="GO:0005829">
    <property type="term" value="C:cytosol"/>
    <property type="evidence" value="ECO:0007005"/>
    <property type="project" value="MTBBASE"/>
</dbReference>
<dbReference type="GO" id="GO:0005576">
    <property type="term" value="C:extracellular region"/>
    <property type="evidence" value="ECO:0007005"/>
    <property type="project" value="MTBBASE"/>
</dbReference>
<dbReference type="GO" id="GO:0009274">
    <property type="term" value="C:peptidoglycan-based cell wall"/>
    <property type="evidence" value="ECO:0007005"/>
    <property type="project" value="MTBBASE"/>
</dbReference>
<dbReference type="GO" id="GO:0005886">
    <property type="term" value="C:plasma membrane"/>
    <property type="evidence" value="ECO:0007005"/>
    <property type="project" value="MTBBASE"/>
</dbReference>
<dbReference type="GO" id="GO:0047456">
    <property type="term" value="F:2-methylisocitrate dehydratase activity"/>
    <property type="evidence" value="ECO:0000250"/>
    <property type="project" value="UniProtKB"/>
</dbReference>
<dbReference type="GO" id="GO:0051539">
    <property type="term" value="F:4 iron, 4 sulfur cluster binding"/>
    <property type="evidence" value="ECO:0000250"/>
    <property type="project" value="UniProtKB"/>
</dbReference>
<dbReference type="GO" id="GO:0003994">
    <property type="term" value="F:aconitate hydratase activity"/>
    <property type="evidence" value="ECO:0000314"/>
    <property type="project" value="MTBBASE"/>
</dbReference>
<dbReference type="GO" id="GO:0030350">
    <property type="term" value="F:iron-responsive element binding"/>
    <property type="evidence" value="ECO:0000314"/>
    <property type="project" value="MTBBASE"/>
</dbReference>
<dbReference type="GO" id="GO:0046872">
    <property type="term" value="F:metal ion binding"/>
    <property type="evidence" value="ECO:0007669"/>
    <property type="project" value="UniProtKB-KW"/>
</dbReference>
<dbReference type="GO" id="GO:0003730">
    <property type="term" value="F:mRNA 3'-UTR binding"/>
    <property type="evidence" value="ECO:0000314"/>
    <property type="project" value="UniProtKB"/>
</dbReference>
<dbReference type="GO" id="GO:0003729">
    <property type="term" value="F:mRNA binding"/>
    <property type="evidence" value="ECO:0000314"/>
    <property type="project" value="UniProtKB"/>
</dbReference>
<dbReference type="GO" id="GO:0019679">
    <property type="term" value="P:propionate metabolic process, methylcitrate cycle"/>
    <property type="evidence" value="ECO:0000304"/>
    <property type="project" value="UniProtKB"/>
</dbReference>
<dbReference type="GO" id="GO:0010039">
    <property type="term" value="P:response to iron ion"/>
    <property type="evidence" value="ECO:0000270"/>
    <property type="project" value="MTBBASE"/>
</dbReference>
<dbReference type="GO" id="GO:0006099">
    <property type="term" value="P:tricarboxylic acid cycle"/>
    <property type="evidence" value="ECO:0000318"/>
    <property type="project" value="GO_Central"/>
</dbReference>
<dbReference type="CDD" id="cd01580">
    <property type="entry name" value="AcnA_IRP_Swivel"/>
    <property type="match status" value="1"/>
</dbReference>
<dbReference type="FunFam" id="3.20.19.10:FF:000001">
    <property type="entry name" value="Aconitate hydratase"/>
    <property type="match status" value="1"/>
</dbReference>
<dbReference type="FunFam" id="3.30.499.10:FF:000002">
    <property type="entry name" value="Aconitate hydratase"/>
    <property type="match status" value="1"/>
</dbReference>
<dbReference type="FunFam" id="3.30.499.10:FF:000009">
    <property type="entry name" value="Aconitate hydratase"/>
    <property type="match status" value="1"/>
</dbReference>
<dbReference type="Gene3D" id="6.10.190.10">
    <property type="match status" value="1"/>
</dbReference>
<dbReference type="Gene3D" id="3.30.499.10">
    <property type="entry name" value="Aconitase, domain 3"/>
    <property type="match status" value="2"/>
</dbReference>
<dbReference type="Gene3D" id="3.20.19.10">
    <property type="entry name" value="Aconitase, domain 4"/>
    <property type="match status" value="1"/>
</dbReference>
<dbReference type="InterPro" id="IPR044137">
    <property type="entry name" value="AcnA_IRP_Swivel"/>
</dbReference>
<dbReference type="InterPro" id="IPR015931">
    <property type="entry name" value="Acnase/IPM_dHydase_lsu_aba_1/3"/>
</dbReference>
<dbReference type="InterPro" id="IPR001030">
    <property type="entry name" value="Acoase/IPM_deHydtase_lsu_aba"/>
</dbReference>
<dbReference type="InterPro" id="IPR015928">
    <property type="entry name" value="Aconitase/3IPM_dehydase_swvl"/>
</dbReference>
<dbReference type="InterPro" id="IPR006249">
    <property type="entry name" value="Aconitase/IRP2"/>
</dbReference>
<dbReference type="InterPro" id="IPR018136">
    <property type="entry name" value="Aconitase_4Fe-4S_BS"/>
</dbReference>
<dbReference type="InterPro" id="IPR036008">
    <property type="entry name" value="Aconitase_4Fe-4S_dom"/>
</dbReference>
<dbReference type="InterPro" id="IPR000573">
    <property type="entry name" value="AconitaseA/IPMdHydase_ssu_swvl"/>
</dbReference>
<dbReference type="NCBIfam" id="NF006757">
    <property type="entry name" value="PRK09277.1"/>
    <property type="match status" value="1"/>
</dbReference>
<dbReference type="NCBIfam" id="NF009520">
    <property type="entry name" value="PRK12881.1"/>
    <property type="match status" value="1"/>
</dbReference>
<dbReference type="PANTHER" id="PTHR11670">
    <property type="entry name" value="ACONITASE/IRON-RESPONSIVE ELEMENT FAMILY MEMBER"/>
    <property type="match status" value="1"/>
</dbReference>
<dbReference type="Pfam" id="PF00330">
    <property type="entry name" value="Aconitase"/>
    <property type="match status" value="1"/>
</dbReference>
<dbReference type="Pfam" id="PF00694">
    <property type="entry name" value="Aconitase_C"/>
    <property type="match status" value="1"/>
</dbReference>
<dbReference type="PRINTS" id="PR00415">
    <property type="entry name" value="ACONITASE"/>
</dbReference>
<dbReference type="SUPFAM" id="SSF53732">
    <property type="entry name" value="Aconitase iron-sulfur domain"/>
    <property type="match status" value="1"/>
</dbReference>
<dbReference type="SUPFAM" id="SSF52016">
    <property type="entry name" value="LeuD/IlvD-like"/>
    <property type="match status" value="1"/>
</dbReference>
<dbReference type="PROSITE" id="PS00450">
    <property type="entry name" value="ACONITASE_1"/>
    <property type="match status" value="1"/>
</dbReference>
<dbReference type="PROSITE" id="PS01244">
    <property type="entry name" value="ACONITASE_2"/>
    <property type="match status" value="1"/>
</dbReference>
<feature type="chain" id="PRO_0000432979" description="Aconitate hydratase A">
    <location>
        <begin position="1"/>
        <end position="943"/>
    </location>
</feature>
<feature type="binding site" evidence="2">
    <location>
        <position position="479"/>
    </location>
    <ligand>
        <name>[4Fe-4S] cluster</name>
        <dbReference type="ChEBI" id="CHEBI:49883"/>
    </ligand>
</feature>
<feature type="binding site" evidence="2">
    <location>
        <position position="545"/>
    </location>
    <ligand>
        <name>[4Fe-4S] cluster</name>
        <dbReference type="ChEBI" id="CHEBI:49883"/>
    </ligand>
</feature>
<feature type="binding site" evidence="2">
    <location>
        <position position="548"/>
    </location>
    <ligand>
        <name>[4Fe-4S] cluster</name>
        <dbReference type="ChEBI" id="CHEBI:49883"/>
    </ligand>
</feature>
<gene>
    <name type="primary">acn</name>
    <name type="ordered locus">Rv1475c</name>
    <name type="ordered locus">RVBD_1475c</name>
    <name type="ORF">P425_01532</name>
</gene>
<accession>O53166</accession>
<accession>F2GES4</accession>
<accession>I6XY12</accession>
<accession>Q7D8D8</accession>
<reference key="1">
    <citation type="journal article" date="1998" name="Nature">
        <title>Deciphering the biology of Mycobacterium tuberculosis from the complete genome sequence.</title>
        <authorList>
            <person name="Cole S.T."/>
            <person name="Brosch R."/>
            <person name="Parkhill J."/>
            <person name="Garnier T."/>
            <person name="Churcher C.M."/>
            <person name="Harris D.E."/>
            <person name="Gordon S.V."/>
            <person name="Eiglmeier K."/>
            <person name="Gas S."/>
            <person name="Barry C.E. III"/>
            <person name="Tekaia F."/>
            <person name="Badcock K."/>
            <person name="Basham D."/>
            <person name="Brown D."/>
            <person name="Chillingworth T."/>
            <person name="Connor R."/>
            <person name="Davies R.M."/>
            <person name="Devlin K."/>
            <person name="Feltwell T."/>
            <person name="Gentles S."/>
            <person name="Hamlin N."/>
            <person name="Holroyd S."/>
            <person name="Hornsby T."/>
            <person name="Jagels K."/>
            <person name="Krogh A."/>
            <person name="McLean J."/>
            <person name="Moule S."/>
            <person name="Murphy L.D."/>
            <person name="Oliver S."/>
            <person name="Osborne J."/>
            <person name="Quail M.A."/>
            <person name="Rajandream M.A."/>
            <person name="Rogers J."/>
            <person name="Rutter S."/>
            <person name="Seeger K."/>
            <person name="Skelton S."/>
            <person name="Squares S."/>
            <person name="Squares R."/>
            <person name="Sulston J.E."/>
            <person name="Taylor K."/>
            <person name="Whitehead S."/>
            <person name="Barrell B.G."/>
        </authorList>
    </citation>
    <scope>NUCLEOTIDE SEQUENCE [LARGE SCALE GENOMIC DNA]</scope>
    <source>
        <strain>ATCC 25618 / H37Rv</strain>
        <strain>H37Rv</strain>
    </source>
</reference>
<reference key="2">
    <citation type="submission" date="2013-11" db="EMBL/GenBank/DDBJ databases">
        <title>The genome sequence of Mycobacterium tuberculosis H37Rv.</title>
        <authorList>
            <consortium name="The Broad Institute Genome Sequencing Platform"/>
            <person name="Galagan J."/>
            <person name="Kreiswirth B."/>
            <person name="Dobos K."/>
            <person name="Fortune S."/>
            <person name="Fitzgerald M."/>
            <person name="Young S.K."/>
            <person name="Zeng Q."/>
            <person name="Gargeya S."/>
            <person name="Abouelleil A."/>
            <person name="Alvarado L."/>
            <person name="Berlin A.M."/>
            <person name="Chapman S.B."/>
            <person name="Gainer-Dewar J."/>
            <person name="Goldberg J."/>
            <person name="Gnerre S."/>
            <person name="Griggs A."/>
            <person name="Gujja S."/>
            <person name="Hansen M."/>
            <person name="Howarth C."/>
            <person name="Imamovic A."/>
            <person name="Larimer J."/>
            <person name="McCowan C."/>
            <person name="Murphy C."/>
            <person name="Pearson M."/>
            <person name="Poon T."/>
            <person name="Priest M."/>
            <person name="Roberts A."/>
            <person name="Saif S."/>
            <person name="Shea T."/>
            <person name="Sykes S."/>
            <person name="Wortman J."/>
            <person name="Nusbaum C."/>
            <person name="Birren B."/>
        </authorList>
    </citation>
    <scope>NUCLEOTIDE SEQUENCE [LARGE SCALE GENOMIC DNA]</scope>
    <source>
        <strain>ATCC 25618 / H37Rv</strain>
    </source>
</reference>
<reference key="3">
    <citation type="submission" date="2014-04" db="EMBL/GenBank/DDBJ databases">
        <title>The genome sequence of Mycobacterium tuberculosis H37Rv.</title>
        <authorList>
            <consortium name="The Broad Institute Genomics Platform"/>
            <consortium name="The Broad Institute Genome Sequencing Center for Infectious Disease"/>
            <person name="Earl A.M."/>
            <person name="Kreiswirth B."/>
            <person name="Gomez J."/>
            <person name="Victor T."/>
            <person name="Desjardins C."/>
            <person name="Abeel T."/>
            <person name="Young S."/>
            <person name="Zeng Q."/>
            <person name="Gargeya S."/>
            <person name="Abouelleil A."/>
            <person name="Alvarado L."/>
            <person name="Chapman S.B."/>
            <person name="Gainer-Dewar J."/>
            <person name="Goldberg J."/>
            <person name="Griggs A."/>
            <person name="Gujja S."/>
            <person name="Hansen M."/>
            <person name="Howarth C."/>
            <person name="Imamovic A."/>
            <person name="Larimer J."/>
            <person name="Murphy C."/>
            <person name="Naylor J."/>
            <person name="Pearson M."/>
            <person name="Poon T.W."/>
            <person name="Priest M."/>
            <person name="Roberts A."/>
            <person name="Saif S."/>
            <person name="Shea T."/>
            <person name="Sykes S."/>
            <person name="Wortman J."/>
            <person name="Nusbaum C."/>
            <person name="Birren B."/>
        </authorList>
    </citation>
    <scope>NUCLEOTIDE SEQUENCE [LARGE SCALE GENOMIC DNA]</scope>
    <source>
        <strain>H37Rv</strain>
    </source>
</reference>
<reference key="4">
    <citation type="journal article" date="2007" name="J. Bacteriol.">
        <title>Iron-dependent RNA-binding activity of Mycobacterium tuberculosis aconitase.</title>
        <authorList>
            <person name="Banerjee S."/>
            <person name="Nandyala A.K."/>
            <person name="Raviprasad P."/>
            <person name="Ahmed N."/>
            <person name="Hasnain S.E."/>
        </authorList>
    </citation>
    <scope>FUNCTION</scope>
    <scope>CATALYTIC ACTIVITY</scope>
    <scope>BIOPHYSICOCHEMICAL PROPERTIES</scope>
    <scope>SUBUNIT</scope>
</reference>
<reference key="5">
    <citation type="journal article" date="2011" name="Mol. Cell. Proteomics">
        <title>Proteogenomic analysis of Mycobacterium tuberculosis by high resolution mass spectrometry.</title>
        <authorList>
            <person name="Kelkar D.S."/>
            <person name="Kumar D."/>
            <person name="Kumar P."/>
            <person name="Balakrishnan L."/>
            <person name="Muthusamy B."/>
            <person name="Yadav A.K."/>
            <person name="Shrivastava P."/>
            <person name="Marimuthu A."/>
            <person name="Anand S."/>
            <person name="Sundaram H."/>
            <person name="Kingsbury R."/>
            <person name="Harsha H.C."/>
            <person name="Nair B."/>
            <person name="Prasad T.S."/>
            <person name="Chauhan D.S."/>
            <person name="Katoch K."/>
            <person name="Katoch V.M."/>
            <person name="Kumar P."/>
            <person name="Chaerkady R."/>
            <person name="Ramachandran S."/>
            <person name="Dash D."/>
            <person name="Pandey A."/>
        </authorList>
    </citation>
    <scope>IDENTIFICATION BY MASS SPECTROMETRY [LARGE SCALE ANALYSIS]</scope>
    <source>
        <strain>ATCC 25618 / H37Rv</strain>
    </source>
</reference>
<reference key="6">
    <citation type="journal article" date="2017" name="Tuberculosis">
        <title>Mycobacterium tuberculosis Rv1474c is a TetR-like transcriptional repressor that regulates aconitase, an essential enzyme and RNA-binding protein, in an iron-responsive manner.</title>
        <authorList>
            <person name="Balakrishnan K."/>
            <person name="Mohareer K."/>
            <person name="Banerjee S."/>
        </authorList>
    </citation>
    <scope>INDUCTION</scope>
</reference>
<name>ACNA_MYCTU</name>
<evidence type="ECO:0000250" key="1">
    <source>
        <dbReference type="UniProtKB" id="P09339"/>
    </source>
</evidence>
<evidence type="ECO:0000250" key="2">
    <source>
        <dbReference type="UniProtKB" id="P36683"/>
    </source>
</evidence>
<evidence type="ECO:0000250" key="3">
    <source>
        <dbReference type="UniProtKB" id="Q8ZP52"/>
    </source>
</evidence>
<evidence type="ECO:0000269" key="4">
    <source>
    </source>
</evidence>
<evidence type="ECO:0000269" key="5">
    <source>
    </source>
</evidence>
<evidence type="ECO:0000303" key="6">
    <source>
    </source>
</evidence>
<evidence type="ECO:0000305" key="7"/>
<evidence type="ECO:0000305" key="8">
    <source>
    </source>
</evidence>
<comment type="function">
    <text evidence="3 4">Involved in the catabolism of short chain fatty acids (SCFA) via the tricarboxylic acid (TCA)(acetyl degradation route) and probably via the 2-methylcitrate cycle I (propionate degradation route). Catalyzes the reversible isomerization of citrate to isocitrate via cis-aconitate. The apo form of AcnA functions as a RNA-binding regulatory protein which binds to selected IRE-like sequences present within the UTRs (untranslated regions) of 3' trxC and 5' IdeR mRNA (PubMed:17384188). Could catalyze the hydration of 2-methyl-cis-aconitate to yield (2R,3S)-2-methylisocitrate (By similarity).</text>
</comment>
<comment type="catalytic activity">
    <reaction evidence="4">
        <text>citrate = D-threo-isocitrate</text>
        <dbReference type="Rhea" id="RHEA:10336"/>
        <dbReference type="ChEBI" id="CHEBI:15562"/>
        <dbReference type="ChEBI" id="CHEBI:16947"/>
        <dbReference type="EC" id="4.2.1.3"/>
    </reaction>
</comment>
<comment type="catalytic activity">
    <reaction evidence="3">
        <text>(2S,3R)-3-hydroxybutane-1,2,3-tricarboxylate = 2-methyl-cis-aconitate + H2O</text>
        <dbReference type="Rhea" id="RHEA:17941"/>
        <dbReference type="ChEBI" id="CHEBI:15377"/>
        <dbReference type="ChEBI" id="CHEBI:57429"/>
        <dbReference type="ChEBI" id="CHEBI:57872"/>
        <dbReference type="EC" id="4.2.1.99"/>
    </reaction>
</comment>
<comment type="cofactor">
    <cofactor evidence="1">
        <name>[4Fe-4S] cluster</name>
        <dbReference type="ChEBI" id="CHEBI:49883"/>
    </cofactor>
    <text evidence="1">Binds 1 [4Fe-4S] cluster per subunit.</text>
</comment>
<comment type="biophysicochemical properties">
    <kinetics>
        <KM evidence="4">0.56 mM for isocitrate</KM>
        <Vmax evidence="4">33.3 umol/min/mg enzyme with isocitrate as substrate</Vmax>
    </kinetics>
    <phDependence>
        <text evidence="4">Optimum pH is 8. It retains a high specific activity over a broad pH range.</text>
    </phDependence>
</comment>
<comment type="pathway">
    <text evidence="8">Carbohydrate metabolism; tricarboxylic acid cycle; isocitrate from oxaloacetate: step 2/2.</text>
</comment>
<comment type="pathway">
    <text evidence="8">Organic acid metabolism; propanoate degradation.</text>
</comment>
<comment type="subunit">
    <text evidence="4">Monomer.</text>
</comment>
<comment type="induction">
    <text evidence="5">Transcriptionally regulated by Rv1474c.</text>
</comment>
<comment type="similarity">
    <text evidence="7">Belongs to the aconitase/IPM isomerase family.</text>
</comment>
<sequence>MTSKSVNSFGAHDTLKVGEKSYQIYRLDAVPNTAKLPYSLKVLAENLLRNEDGSNITKDHIEAIANWDPKAEPSIEIQYTPARVVMQDFTGVPCIVDLATMREAIADLGGNPDKVNPLAPADLVIDHSVIADLFGRADAFERNVEIEYQRNGERYQFLRWGQGAFDDFKVVPPGTGIVHQVNIEYLASVVMTRDGVAYPDTCVGTDSHTTMVNGLGVLGWGVGGIEAEAAMLGQPVSMLIPRVVGFRLTGEIQPGVTATDVVLTVTEMLRQHGVVGKFVEFYGEGVAEVPLANRATLGNMSPEFGSTAAIFPIDEETIKYLRFTGRTPEQVALVEAYAKAQGMWHDPKHEPEFSEYLELNLSDVVPSIAGPKRPQDRIALAQAKSTFREQIYHYVGNGSPDSPHDPHSKLDEVVEETFPASDPGQLTFANDDVATDETVHSAAAHADGRVSNPVRVKSDELGEFVLDHGAVVIAAITSCTNTSNPEVMLGAALLARNAVEKGLTSKPWVKTTIAPGSQVVNDYYDRSGLWPYLEKLGFYLVGYGCTTCIGNSGPLPEEISKAVNDNDLSVTAVLSGNRNFEGRINPDVKMNYLASPPLVIAYALAGTMDFDFQTQPLGQDKDGKNVFLRDIWPSQQDVSDTIAAAINQEMFTRNYADVFKGDDRWRNLPTPSGNTFEWDPNSTYVRKPPYFEGMTAKPEPVGNISGARVLALLGDSVTTDHISPAGAIKPGTPAARYLDEHGVDRKDYNSFGSRRGNHEVMIRGTFANIRLRNQLLDDVSGGYTRDFTQPGGPQAFIYDAAQNYAAQHIPLVVFGGKEYGSGSSRDWAAKGTLLLGVRAVIAESFERIHRSNLIGMGVIPLQFPEGKSASSLGLDGTEVFDITGIDVLNDGKTPKTVCVQATKGDGATIEFDAVVRIDTPGEADYYRNGGILQYVLRNILKSG</sequence>
<organism>
    <name type="scientific">Mycobacterium tuberculosis (strain ATCC 25618 / H37Rv)</name>
    <dbReference type="NCBI Taxonomy" id="83332"/>
    <lineage>
        <taxon>Bacteria</taxon>
        <taxon>Bacillati</taxon>
        <taxon>Actinomycetota</taxon>
        <taxon>Actinomycetes</taxon>
        <taxon>Mycobacteriales</taxon>
        <taxon>Mycobacteriaceae</taxon>
        <taxon>Mycobacterium</taxon>
        <taxon>Mycobacterium tuberculosis complex</taxon>
    </lineage>
</organism>